<comment type="function">
    <text evidence="1">Catalyzes the hydrolysis of N-succinyl-L,L-diaminopimelic acid (SDAP), forming succinate and LL-2,6-diaminopimelate (DAP), an intermediate involved in the bacterial biosynthesis of lysine and meso-diaminopimelic acid, an essential component of bacterial cell walls.</text>
</comment>
<comment type="catalytic activity">
    <reaction evidence="1">
        <text>N-succinyl-(2S,6S)-2,6-diaminopimelate + H2O = (2S,6S)-2,6-diaminopimelate + succinate</text>
        <dbReference type="Rhea" id="RHEA:22608"/>
        <dbReference type="ChEBI" id="CHEBI:15377"/>
        <dbReference type="ChEBI" id="CHEBI:30031"/>
        <dbReference type="ChEBI" id="CHEBI:57609"/>
        <dbReference type="ChEBI" id="CHEBI:58087"/>
        <dbReference type="EC" id="3.5.1.18"/>
    </reaction>
</comment>
<comment type="cofactor">
    <cofactor evidence="1">
        <name>Zn(2+)</name>
        <dbReference type="ChEBI" id="CHEBI:29105"/>
    </cofactor>
    <cofactor evidence="1">
        <name>Co(2+)</name>
        <dbReference type="ChEBI" id="CHEBI:48828"/>
    </cofactor>
    <text evidence="1">Binds 2 Zn(2+) or Co(2+) ions per subunit.</text>
</comment>
<comment type="pathway">
    <text evidence="1">Amino-acid biosynthesis; L-lysine biosynthesis via DAP pathway; LL-2,6-diaminopimelate from (S)-tetrahydrodipicolinate (succinylase route): step 3/3.</text>
</comment>
<comment type="subunit">
    <text evidence="1">Homodimer.</text>
</comment>
<comment type="similarity">
    <text evidence="1">Belongs to the peptidase M20A family. DapE subfamily.</text>
</comment>
<dbReference type="EC" id="3.5.1.18" evidence="1"/>
<dbReference type="EMBL" id="AM039952">
    <property type="protein sequence ID" value="CAJ23120.1"/>
    <property type="molecule type" value="Genomic_DNA"/>
</dbReference>
<dbReference type="RefSeq" id="WP_011346903.1">
    <property type="nucleotide sequence ID" value="NZ_CP017190.1"/>
</dbReference>
<dbReference type="SMR" id="Q3BVJ3"/>
<dbReference type="STRING" id="456327.BJD11_15195"/>
<dbReference type="GeneID" id="97509787"/>
<dbReference type="KEGG" id="xcv:XCV1489"/>
<dbReference type="eggNOG" id="COG0624">
    <property type="taxonomic scope" value="Bacteria"/>
</dbReference>
<dbReference type="HOGENOM" id="CLU_021802_4_0_6"/>
<dbReference type="UniPathway" id="UPA00034">
    <property type="reaction ID" value="UER00021"/>
</dbReference>
<dbReference type="Proteomes" id="UP000007069">
    <property type="component" value="Chromosome"/>
</dbReference>
<dbReference type="GO" id="GO:0008777">
    <property type="term" value="F:acetylornithine deacetylase activity"/>
    <property type="evidence" value="ECO:0007669"/>
    <property type="project" value="TreeGrafter"/>
</dbReference>
<dbReference type="GO" id="GO:0050897">
    <property type="term" value="F:cobalt ion binding"/>
    <property type="evidence" value="ECO:0007669"/>
    <property type="project" value="UniProtKB-UniRule"/>
</dbReference>
<dbReference type="GO" id="GO:0009014">
    <property type="term" value="F:succinyl-diaminopimelate desuccinylase activity"/>
    <property type="evidence" value="ECO:0007669"/>
    <property type="project" value="UniProtKB-UniRule"/>
</dbReference>
<dbReference type="GO" id="GO:0008270">
    <property type="term" value="F:zinc ion binding"/>
    <property type="evidence" value="ECO:0007669"/>
    <property type="project" value="UniProtKB-UniRule"/>
</dbReference>
<dbReference type="GO" id="GO:0019877">
    <property type="term" value="P:diaminopimelate biosynthetic process"/>
    <property type="evidence" value="ECO:0007669"/>
    <property type="project" value="UniProtKB-UniRule"/>
</dbReference>
<dbReference type="GO" id="GO:0006526">
    <property type="term" value="P:L-arginine biosynthetic process"/>
    <property type="evidence" value="ECO:0007669"/>
    <property type="project" value="TreeGrafter"/>
</dbReference>
<dbReference type="GO" id="GO:0009089">
    <property type="term" value="P:lysine biosynthetic process via diaminopimelate"/>
    <property type="evidence" value="ECO:0007669"/>
    <property type="project" value="UniProtKB-UniRule"/>
</dbReference>
<dbReference type="CDD" id="cd03891">
    <property type="entry name" value="M20_DapE_proteobac"/>
    <property type="match status" value="1"/>
</dbReference>
<dbReference type="FunFam" id="3.40.630.10:FF:000005">
    <property type="entry name" value="Succinyl-diaminopimelate desuccinylase"/>
    <property type="match status" value="1"/>
</dbReference>
<dbReference type="Gene3D" id="3.40.630.10">
    <property type="entry name" value="Zn peptidases"/>
    <property type="match status" value="2"/>
</dbReference>
<dbReference type="HAMAP" id="MF_01690">
    <property type="entry name" value="DapE"/>
    <property type="match status" value="1"/>
</dbReference>
<dbReference type="InterPro" id="IPR001261">
    <property type="entry name" value="ArgE/DapE_CS"/>
</dbReference>
<dbReference type="InterPro" id="IPR036264">
    <property type="entry name" value="Bact_exopeptidase_dim_dom"/>
</dbReference>
<dbReference type="InterPro" id="IPR005941">
    <property type="entry name" value="DapE_proteobac"/>
</dbReference>
<dbReference type="InterPro" id="IPR002933">
    <property type="entry name" value="Peptidase_M20"/>
</dbReference>
<dbReference type="InterPro" id="IPR011650">
    <property type="entry name" value="Peptidase_M20_dimer"/>
</dbReference>
<dbReference type="InterPro" id="IPR050072">
    <property type="entry name" value="Peptidase_M20A"/>
</dbReference>
<dbReference type="NCBIfam" id="TIGR01246">
    <property type="entry name" value="dapE_proteo"/>
    <property type="match status" value="1"/>
</dbReference>
<dbReference type="NCBIfam" id="NF009557">
    <property type="entry name" value="PRK13009.1"/>
    <property type="match status" value="1"/>
</dbReference>
<dbReference type="PANTHER" id="PTHR43808">
    <property type="entry name" value="ACETYLORNITHINE DEACETYLASE"/>
    <property type="match status" value="1"/>
</dbReference>
<dbReference type="PANTHER" id="PTHR43808:SF31">
    <property type="entry name" value="N-ACETYL-L-CITRULLINE DEACETYLASE"/>
    <property type="match status" value="1"/>
</dbReference>
<dbReference type="Pfam" id="PF07687">
    <property type="entry name" value="M20_dimer"/>
    <property type="match status" value="1"/>
</dbReference>
<dbReference type="Pfam" id="PF01546">
    <property type="entry name" value="Peptidase_M20"/>
    <property type="match status" value="1"/>
</dbReference>
<dbReference type="SUPFAM" id="SSF55031">
    <property type="entry name" value="Bacterial exopeptidase dimerisation domain"/>
    <property type="match status" value="1"/>
</dbReference>
<dbReference type="SUPFAM" id="SSF53187">
    <property type="entry name" value="Zn-dependent exopeptidases"/>
    <property type="match status" value="1"/>
</dbReference>
<dbReference type="PROSITE" id="PS00759">
    <property type="entry name" value="ARGE_DAPE_CPG2_2"/>
    <property type="match status" value="1"/>
</dbReference>
<evidence type="ECO:0000255" key="1">
    <source>
        <dbReference type="HAMAP-Rule" id="MF_01690"/>
    </source>
</evidence>
<feature type="chain" id="PRO_0000375785" description="Succinyl-diaminopimelate desuccinylase">
    <location>
        <begin position="1"/>
        <end position="376"/>
    </location>
</feature>
<feature type="active site" evidence="1">
    <location>
        <position position="68"/>
    </location>
</feature>
<feature type="active site" description="Proton acceptor" evidence="1">
    <location>
        <position position="133"/>
    </location>
</feature>
<feature type="binding site" evidence="1">
    <location>
        <position position="66"/>
    </location>
    <ligand>
        <name>Zn(2+)</name>
        <dbReference type="ChEBI" id="CHEBI:29105"/>
        <label>1</label>
    </ligand>
</feature>
<feature type="binding site" evidence="1">
    <location>
        <position position="99"/>
    </location>
    <ligand>
        <name>Zn(2+)</name>
        <dbReference type="ChEBI" id="CHEBI:29105"/>
        <label>1</label>
    </ligand>
</feature>
<feature type="binding site" evidence="1">
    <location>
        <position position="99"/>
    </location>
    <ligand>
        <name>Zn(2+)</name>
        <dbReference type="ChEBI" id="CHEBI:29105"/>
        <label>2</label>
    </ligand>
</feature>
<feature type="binding site" evidence="1">
    <location>
        <position position="134"/>
    </location>
    <ligand>
        <name>Zn(2+)</name>
        <dbReference type="ChEBI" id="CHEBI:29105"/>
        <label>2</label>
    </ligand>
</feature>
<feature type="binding site" evidence="1">
    <location>
        <position position="162"/>
    </location>
    <ligand>
        <name>Zn(2+)</name>
        <dbReference type="ChEBI" id="CHEBI:29105"/>
        <label>1</label>
    </ligand>
</feature>
<feature type="binding site" evidence="1">
    <location>
        <position position="348"/>
    </location>
    <ligand>
        <name>Zn(2+)</name>
        <dbReference type="ChEBI" id="CHEBI:29105"/>
        <label>2</label>
    </ligand>
</feature>
<name>DAPE_XANE5</name>
<protein>
    <recommendedName>
        <fullName evidence="1">Succinyl-diaminopimelate desuccinylase</fullName>
        <shortName evidence="1">SDAP desuccinylase</shortName>
        <ecNumber evidence="1">3.5.1.18</ecNumber>
    </recommendedName>
    <alternativeName>
        <fullName evidence="1">N-succinyl-LL-2,6-diaminoheptanedioate amidohydrolase</fullName>
    </alternativeName>
</protein>
<accession>Q3BVJ3</accession>
<organism>
    <name type="scientific">Xanthomonas euvesicatoria pv. vesicatoria (strain 85-10)</name>
    <name type="common">Xanthomonas campestris pv. vesicatoria</name>
    <dbReference type="NCBI Taxonomy" id="316273"/>
    <lineage>
        <taxon>Bacteria</taxon>
        <taxon>Pseudomonadati</taxon>
        <taxon>Pseudomonadota</taxon>
        <taxon>Gammaproteobacteria</taxon>
        <taxon>Lysobacterales</taxon>
        <taxon>Lysobacteraceae</taxon>
        <taxon>Xanthomonas</taxon>
    </lineage>
</organism>
<sequence>MSDVLELTCDLIARASVTPADAGCQAAIAQRLRAAGFGCEHLRLGEVENLWATHGSGAPVLVLLGHTDVVPPGPREAWTSDPFDPQIRDGVLYGRGAADMKGSVAAFVVAAEQFVAAHPTHSGTLAVLLTSDEEGDAIDGVRRVAEVFRERGQTIDWCITGEPSSTERLGDLLRVGRRGSLSGTLTVKGVQGHVAYPHKARNPIHLAAPALAELVARQWDDGFESFPPTSLQLSNIHAGTGANNVIPGELQVAFNLRYTPHWDAPRLEAEITALLDRHALDYTLRWHRSGEPFYTPEGRLRSVAREVLGEFAGAPPEESTGGGTSDARFIAPLGAQCIEVGPVNASIHQVDEHVRVADLQALPALYRTLIERLLVE</sequence>
<keyword id="KW-0028">Amino-acid biosynthesis</keyword>
<keyword id="KW-0170">Cobalt</keyword>
<keyword id="KW-0220">Diaminopimelate biosynthesis</keyword>
<keyword id="KW-0378">Hydrolase</keyword>
<keyword id="KW-0457">Lysine biosynthesis</keyword>
<keyword id="KW-0479">Metal-binding</keyword>
<keyword id="KW-0862">Zinc</keyword>
<reference key="1">
    <citation type="journal article" date="2005" name="J. Bacteriol.">
        <title>Insights into genome plasticity and pathogenicity of the plant pathogenic Bacterium Xanthomonas campestris pv. vesicatoria revealed by the complete genome sequence.</title>
        <authorList>
            <person name="Thieme F."/>
            <person name="Koebnik R."/>
            <person name="Bekel T."/>
            <person name="Berger C."/>
            <person name="Boch J."/>
            <person name="Buettner D."/>
            <person name="Caldana C."/>
            <person name="Gaigalat L."/>
            <person name="Goesmann A."/>
            <person name="Kay S."/>
            <person name="Kirchner O."/>
            <person name="Lanz C."/>
            <person name="Linke B."/>
            <person name="McHardy A.C."/>
            <person name="Meyer F."/>
            <person name="Mittenhuber G."/>
            <person name="Nies D.H."/>
            <person name="Niesbach-Kloesgen U."/>
            <person name="Patschkowski T."/>
            <person name="Rueckert C."/>
            <person name="Rupp O."/>
            <person name="Schneiker S."/>
            <person name="Schuster S.C."/>
            <person name="Vorhoelter F.J."/>
            <person name="Weber E."/>
            <person name="Puehler A."/>
            <person name="Bonas U."/>
            <person name="Bartels D."/>
            <person name="Kaiser O."/>
        </authorList>
    </citation>
    <scope>NUCLEOTIDE SEQUENCE [LARGE SCALE GENOMIC DNA]</scope>
    <source>
        <strain>85-10</strain>
    </source>
</reference>
<proteinExistence type="inferred from homology"/>
<gene>
    <name evidence="1" type="primary">dapE</name>
    <name type="ordered locus">XCV1489</name>
</gene>